<sequence>MDASLEKIADPTLAEMGKNLKEAMRMLEKSPRRTEEENGKKPVSEDIPGPLQGSGQDMVSILQLVQNLMHGDEDEEPQSTRIQNIGEQGHMALLGHSLGAYISTLDKEKLRKLTTRILSDTTLWLRRIFRYENGCAYFHEEEREGLAKICRLAIHSRYEDFVVDGFNVLYNKKPVIYLSAAARPGLGQYLCNQLGLPFPCLCRVPCNTMFGSQHQMDVAFLEKLIKDDVERGRLPLLLVANAGTAAVGHTDKIGRLKELCEQYGIWLHVEGVNLATLALGYVSSSVLAATKCDSMTLTPGLWLGLPAVPAVTLYKHDDPALTLVAGLTSNKPADKLRALPLWLSLQYLGLDGIVERIKHACHLSQRLQESLKKVDHIKILVEDELSSPVVVFRFFQELPASDSAFKAVPVSNIAPAAVGRERHSCDALNRWLGEQLKQLVPQCGLTVIDLEVDGTCVRFSPLMTAEGLGTRGEDVDQLITCIQSKLPVLTCTLQLREEFKQEVEGTAGLLYVDDPNWPGIGVVRYEHANDDDTSLKSDPEGEKIHTGLLKKLNELESDLTFKIGPEYKSMKSCIYIGMASDDVDVSELVETIAVTAREIEENSRLLENMTEVVRKGIQEAQVQLQKANEERLLEEGVLRQIPVVGSVLNWFSPVQASQKGRSFNLTAGSLESTEYTYVHKVQGTGVTPPPTPLGTRSKQRLPGQKPFKRSLRGSDAVSETSSVSHIEDLEKVEQLSSGLEHDNLEAHSPEQPPRATDLTARQTEALQNQAQHQEDDHSQVEELERLR</sequence>
<evidence type="ECO:0000250" key="1"/>
<evidence type="ECO:0000250" key="2">
    <source>
        <dbReference type="UniProtKB" id="Q6P996"/>
    </source>
</evidence>
<evidence type="ECO:0000256" key="3">
    <source>
        <dbReference type="SAM" id="MobiDB-lite"/>
    </source>
</evidence>
<evidence type="ECO:0000303" key="4">
    <source>
    </source>
</evidence>
<evidence type="ECO:0000305" key="5"/>
<evidence type="ECO:0007744" key="6">
    <source>
    </source>
</evidence>
<evidence type="ECO:0007744" key="7">
    <source>
    </source>
</evidence>
<evidence type="ECO:0007744" key="8">
    <source>
    </source>
</evidence>
<comment type="cofactor">
    <cofactor evidence="1">
        <name>pyridoxal 5'-phosphate</name>
        <dbReference type="ChEBI" id="CHEBI:597326"/>
    </cofactor>
</comment>
<comment type="alternative products">
    <event type="alternative splicing"/>
    <isoform>
        <id>Q99K01-1</id>
        <name>1</name>
        <sequence type="displayed"/>
    </isoform>
    <isoform>
        <id>Q99K01-2</id>
        <name>2</name>
        <sequence type="described" ref="VSP_027346"/>
    </isoform>
    <isoform>
        <id>Q99K01-3</id>
        <name>3</name>
        <sequence type="described" ref="VSP_027345"/>
    </isoform>
    <isoform>
        <id>Q99K01-4</id>
        <name>4</name>
        <sequence type="described" ref="VSP_027344"/>
    </isoform>
    <isoform>
        <id>Q99K01-5</id>
        <name>5</name>
        <sequence type="described" ref="VSP_029421 VSP_029422"/>
    </isoform>
</comment>
<comment type="similarity">
    <text evidence="5">Belongs to the group II decarboxylase family.</text>
</comment>
<comment type="sequence caution" evidence="5">
    <conflict type="erroneous initiation">
        <sequence resource="EMBL-CDS" id="BAC35991"/>
    </conflict>
</comment>
<gene>
    <name type="primary">Pdxdc1</name>
</gene>
<reference key="1">
    <citation type="journal article" date="2005" name="Science">
        <title>The transcriptional landscape of the mammalian genome.</title>
        <authorList>
            <person name="Carninci P."/>
            <person name="Kasukawa T."/>
            <person name="Katayama S."/>
            <person name="Gough J."/>
            <person name="Frith M.C."/>
            <person name="Maeda N."/>
            <person name="Oyama R."/>
            <person name="Ravasi T."/>
            <person name="Lenhard B."/>
            <person name="Wells C."/>
            <person name="Kodzius R."/>
            <person name="Shimokawa K."/>
            <person name="Bajic V.B."/>
            <person name="Brenner S.E."/>
            <person name="Batalov S."/>
            <person name="Forrest A.R."/>
            <person name="Zavolan M."/>
            <person name="Davis M.J."/>
            <person name="Wilming L.G."/>
            <person name="Aidinis V."/>
            <person name="Allen J.E."/>
            <person name="Ambesi-Impiombato A."/>
            <person name="Apweiler R."/>
            <person name="Aturaliya R.N."/>
            <person name="Bailey T.L."/>
            <person name="Bansal M."/>
            <person name="Baxter L."/>
            <person name="Beisel K.W."/>
            <person name="Bersano T."/>
            <person name="Bono H."/>
            <person name="Chalk A.M."/>
            <person name="Chiu K.P."/>
            <person name="Choudhary V."/>
            <person name="Christoffels A."/>
            <person name="Clutterbuck D.R."/>
            <person name="Crowe M.L."/>
            <person name="Dalla E."/>
            <person name="Dalrymple B.P."/>
            <person name="de Bono B."/>
            <person name="Della Gatta G."/>
            <person name="di Bernardo D."/>
            <person name="Down T."/>
            <person name="Engstrom P."/>
            <person name="Fagiolini M."/>
            <person name="Faulkner G."/>
            <person name="Fletcher C.F."/>
            <person name="Fukushima T."/>
            <person name="Furuno M."/>
            <person name="Futaki S."/>
            <person name="Gariboldi M."/>
            <person name="Georgii-Hemming P."/>
            <person name="Gingeras T.R."/>
            <person name="Gojobori T."/>
            <person name="Green R.E."/>
            <person name="Gustincich S."/>
            <person name="Harbers M."/>
            <person name="Hayashi Y."/>
            <person name="Hensch T.K."/>
            <person name="Hirokawa N."/>
            <person name="Hill D."/>
            <person name="Huminiecki L."/>
            <person name="Iacono M."/>
            <person name="Ikeo K."/>
            <person name="Iwama A."/>
            <person name="Ishikawa T."/>
            <person name="Jakt M."/>
            <person name="Kanapin A."/>
            <person name="Katoh M."/>
            <person name="Kawasawa Y."/>
            <person name="Kelso J."/>
            <person name="Kitamura H."/>
            <person name="Kitano H."/>
            <person name="Kollias G."/>
            <person name="Krishnan S.P."/>
            <person name="Kruger A."/>
            <person name="Kummerfeld S.K."/>
            <person name="Kurochkin I.V."/>
            <person name="Lareau L.F."/>
            <person name="Lazarevic D."/>
            <person name="Lipovich L."/>
            <person name="Liu J."/>
            <person name="Liuni S."/>
            <person name="McWilliam S."/>
            <person name="Madan Babu M."/>
            <person name="Madera M."/>
            <person name="Marchionni L."/>
            <person name="Matsuda H."/>
            <person name="Matsuzawa S."/>
            <person name="Miki H."/>
            <person name="Mignone F."/>
            <person name="Miyake S."/>
            <person name="Morris K."/>
            <person name="Mottagui-Tabar S."/>
            <person name="Mulder N."/>
            <person name="Nakano N."/>
            <person name="Nakauchi H."/>
            <person name="Ng P."/>
            <person name="Nilsson R."/>
            <person name="Nishiguchi S."/>
            <person name="Nishikawa S."/>
            <person name="Nori F."/>
            <person name="Ohara O."/>
            <person name="Okazaki Y."/>
            <person name="Orlando V."/>
            <person name="Pang K.C."/>
            <person name="Pavan W.J."/>
            <person name="Pavesi G."/>
            <person name="Pesole G."/>
            <person name="Petrovsky N."/>
            <person name="Piazza S."/>
            <person name="Reed J."/>
            <person name="Reid J.F."/>
            <person name="Ring B.Z."/>
            <person name="Ringwald M."/>
            <person name="Rost B."/>
            <person name="Ruan Y."/>
            <person name="Salzberg S.L."/>
            <person name="Sandelin A."/>
            <person name="Schneider C."/>
            <person name="Schoenbach C."/>
            <person name="Sekiguchi K."/>
            <person name="Semple C.A."/>
            <person name="Seno S."/>
            <person name="Sessa L."/>
            <person name="Sheng Y."/>
            <person name="Shibata Y."/>
            <person name="Shimada H."/>
            <person name="Shimada K."/>
            <person name="Silva D."/>
            <person name="Sinclair B."/>
            <person name="Sperling S."/>
            <person name="Stupka E."/>
            <person name="Sugiura K."/>
            <person name="Sultana R."/>
            <person name="Takenaka Y."/>
            <person name="Taki K."/>
            <person name="Tammoja K."/>
            <person name="Tan S.L."/>
            <person name="Tang S."/>
            <person name="Taylor M.S."/>
            <person name="Tegner J."/>
            <person name="Teichmann S.A."/>
            <person name="Ueda H.R."/>
            <person name="van Nimwegen E."/>
            <person name="Verardo R."/>
            <person name="Wei C.L."/>
            <person name="Yagi K."/>
            <person name="Yamanishi H."/>
            <person name="Zabarovsky E."/>
            <person name="Zhu S."/>
            <person name="Zimmer A."/>
            <person name="Hide W."/>
            <person name="Bult C."/>
            <person name="Grimmond S.M."/>
            <person name="Teasdale R.D."/>
            <person name="Liu E.T."/>
            <person name="Brusic V."/>
            <person name="Quackenbush J."/>
            <person name="Wahlestedt C."/>
            <person name="Mattick J.S."/>
            <person name="Hume D.A."/>
            <person name="Kai C."/>
            <person name="Sasaki D."/>
            <person name="Tomaru Y."/>
            <person name="Fukuda S."/>
            <person name="Kanamori-Katayama M."/>
            <person name="Suzuki M."/>
            <person name="Aoki J."/>
            <person name="Arakawa T."/>
            <person name="Iida J."/>
            <person name="Imamura K."/>
            <person name="Itoh M."/>
            <person name="Kato T."/>
            <person name="Kawaji H."/>
            <person name="Kawagashira N."/>
            <person name="Kawashima T."/>
            <person name="Kojima M."/>
            <person name="Kondo S."/>
            <person name="Konno H."/>
            <person name="Nakano K."/>
            <person name="Ninomiya N."/>
            <person name="Nishio T."/>
            <person name="Okada M."/>
            <person name="Plessy C."/>
            <person name="Shibata K."/>
            <person name="Shiraki T."/>
            <person name="Suzuki S."/>
            <person name="Tagami M."/>
            <person name="Waki K."/>
            <person name="Watahiki A."/>
            <person name="Okamura-Oho Y."/>
            <person name="Suzuki H."/>
            <person name="Kawai J."/>
            <person name="Hayashizaki Y."/>
        </authorList>
    </citation>
    <scope>NUCLEOTIDE SEQUENCE [LARGE SCALE MRNA] (ISOFORMS 1; 2; 3 AND 5)</scope>
    <scope>NUCLEOTIDE SEQUENCE [LARGE SCALE MRNA] OF 223-787 (ISOFORM 4)</scope>
    <source>
        <strain>C57BL/6J</strain>
        <tissue>Cerebellum</tissue>
        <tissue>Lung</tissue>
        <tissue>Ovary</tissue>
        <tissue>Pituitary</tissue>
        <tissue>Stomach</tissue>
        <tissue>Testis</tissue>
        <tissue>Urinary bladder</tissue>
    </source>
</reference>
<reference key="2">
    <citation type="journal article" date="2004" name="Genome Res.">
        <title>The status, quality, and expansion of the NIH full-length cDNA project: the Mammalian Gene Collection (MGC).</title>
        <authorList>
            <consortium name="The MGC Project Team"/>
        </authorList>
    </citation>
    <scope>NUCLEOTIDE SEQUENCE [LARGE SCALE MRNA] (ISOFORM 1)</scope>
    <source>
        <strain>Czech II</strain>
        <tissue>Mammary tumor</tissue>
    </source>
</reference>
<reference key="3">
    <citation type="journal article" date="2007" name="Proc. Natl. Acad. Sci. U.S.A.">
        <title>Large-scale phosphorylation analysis of mouse liver.</title>
        <authorList>
            <person name="Villen J."/>
            <person name="Beausoleil S.A."/>
            <person name="Gerber S.A."/>
            <person name="Gygi S.P."/>
        </authorList>
    </citation>
    <scope>PHOSPHORYLATION [LARGE SCALE ANALYSIS] AT THR-687 AND SER-718</scope>
    <scope>IDENTIFICATION BY MASS SPECTROMETRY [LARGE SCALE ANALYSIS]</scope>
    <source>
        <tissue>Liver</tissue>
    </source>
</reference>
<reference key="4">
    <citation type="journal article" date="2009" name="Mol. Cell. Proteomics">
        <title>Large scale localization of protein phosphorylation by use of electron capture dissociation mass spectrometry.</title>
        <authorList>
            <person name="Sweet S.M."/>
            <person name="Bailey C.M."/>
            <person name="Cunningham D.L."/>
            <person name="Heath J.K."/>
            <person name="Cooper H.J."/>
        </authorList>
    </citation>
    <scope>PHOSPHORYLATION [LARGE SCALE ANALYSIS] AT THR-687</scope>
    <scope>IDENTIFICATION BY MASS SPECTROMETRY [LARGE SCALE ANALYSIS]</scope>
    <source>
        <tissue>Embryonic fibroblast</tissue>
    </source>
</reference>
<reference key="5">
    <citation type="journal article" date="2010" name="Cell">
        <title>A tissue-specific atlas of mouse protein phosphorylation and expression.</title>
        <authorList>
            <person name="Huttlin E.L."/>
            <person name="Jedrychowski M.P."/>
            <person name="Elias J.E."/>
            <person name="Goswami T."/>
            <person name="Rad R."/>
            <person name="Beausoleil S.A."/>
            <person name="Villen J."/>
            <person name="Haas W."/>
            <person name="Sowa M.E."/>
            <person name="Gygi S.P."/>
        </authorList>
    </citation>
    <scope>PHOSPHORYLATION [LARGE SCALE ANALYSIS] AT THR-687; THR-691 AND SER-748</scope>
    <scope>IDENTIFICATION BY MASS SPECTROMETRY [LARGE SCALE ANALYSIS]</scope>
    <source>
        <tissue>Brain</tissue>
        <tissue>Brown adipose tissue</tissue>
        <tissue>Heart</tissue>
        <tissue>Kidney</tissue>
        <tissue>Liver</tissue>
        <tissue>Lung</tissue>
        <tissue>Pancreas</tissue>
        <tissue>Spleen</tissue>
        <tissue>Testis</tissue>
    </source>
</reference>
<proteinExistence type="evidence at protein level"/>
<dbReference type="EC" id="4.1.1.-"/>
<dbReference type="EMBL" id="AK004611">
    <property type="protein sequence ID" value="BAB23408.1"/>
    <property type="molecule type" value="mRNA"/>
</dbReference>
<dbReference type="EMBL" id="AK030613">
    <property type="protein sequence ID" value="BAC27047.1"/>
    <property type="molecule type" value="mRNA"/>
</dbReference>
<dbReference type="EMBL" id="AK033107">
    <property type="protein sequence ID" value="BAC28155.1"/>
    <property type="molecule type" value="mRNA"/>
</dbReference>
<dbReference type="EMBL" id="AK054329">
    <property type="protein sequence ID" value="BAC35732.1"/>
    <property type="molecule type" value="mRNA"/>
</dbReference>
<dbReference type="EMBL" id="AK075829">
    <property type="protein sequence ID" value="BAC35991.1"/>
    <property type="status" value="ALT_INIT"/>
    <property type="molecule type" value="mRNA"/>
</dbReference>
<dbReference type="EMBL" id="AK163696">
    <property type="protein sequence ID" value="BAE37462.1"/>
    <property type="molecule type" value="mRNA"/>
</dbReference>
<dbReference type="EMBL" id="AK165587">
    <property type="protein sequence ID" value="BAE38276.1"/>
    <property type="molecule type" value="mRNA"/>
</dbReference>
<dbReference type="EMBL" id="AK170661">
    <property type="protein sequence ID" value="BAE41943.1"/>
    <property type="molecule type" value="mRNA"/>
</dbReference>
<dbReference type="EMBL" id="BC005541">
    <property type="protein sequence ID" value="AAH05541.1"/>
    <property type="molecule type" value="mRNA"/>
</dbReference>
<dbReference type="CCDS" id="CCDS37261.1">
    <molecule id="Q99K01-3"/>
</dbReference>
<dbReference type="RefSeq" id="NP_001034622.1">
    <molecule id="Q99K01-3"/>
    <property type="nucleotide sequence ID" value="NM_001039533.2"/>
</dbReference>
<dbReference type="RefSeq" id="NP_001277946.1">
    <property type="nucleotide sequence ID" value="NM_001291017.1"/>
</dbReference>
<dbReference type="RefSeq" id="NP_444411.2">
    <molecule id="Q99K01-1"/>
    <property type="nucleotide sequence ID" value="NM_053181.3"/>
</dbReference>
<dbReference type="SMR" id="Q99K01"/>
<dbReference type="BioGRID" id="220462">
    <property type="interactions" value="8"/>
</dbReference>
<dbReference type="FunCoup" id="Q99K01">
    <property type="interactions" value="3737"/>
</dbReference>
<dbReference type="IntAct" id="Q99K01">
    <property type="interactions" value="3"/>
</dbReference>
<dbReference type="MINT" id="Q99K01"/>
<dbReference type="STRING" id="10090.ENSMUSP00000023361"/>
<dbReference type="GlyGen" id="Q99K01">
    <property type="glycosylation" value="3 sites, 1 N-linked glycan (1 site), 1 O-linked glycan (1 site)"/>
</dbReference>
<dbReference type="iPTMnet" id="Q99K01"/>
<dbReference type="PhosphoSitePlus" id="Q99K01"/>
<dbReference type="SwissPalm" id="Q99K01"/>
<dbReference type="jPOST" id="Q99K01"/>
<dbReference type="PaxDb" id="10090-ENSMUSP00000111471"/>
<dbReference type="PeptideAtlas" id="Q99K01"/>
<dbReference type="ProteomicsDB" id="287814">
    <molecule id="Q99K01-1"/>
</dbReference>
<dbReference type="ProteomicsDB" id="287815">
    <molecule id="Q99K01-2"/>
</dbReference>
<dbReference type="ProteomicsDB" id="287816">
    <molecule id="Q99K01-3"/>
</dbReference>
<dbReference type="ProteomicsDB" id="287817">
    <molecule id="Q99K01-4"/>
</dbReference>
<dbReference type="ProteomicsDB" id="287818">
    <molecule id="Q99K01-5"/>
</dbReference>
<dbReference type="Pumba" id="Q99K01"/>
<dbReference type="Antibodypedia" id="24937">
    <property type="antibodies" value="205 antibodies from 28 providers"/>
</dbReference>
<dbReference type="Ensembl" id="ENSMUST00000115802.2">
    <molecule id="Q99K01-5"/>
    <property type="protein sequence ID" value="ENSMUSP00000111468.2"/>
    <property type="gene ID" value="ENSMUSG00000022680.15"/>
</dbReference>
<dbReference type="Ensembl" id="ENSMUST00000115804.9">
    <molecule id="Q99K01-3"/>
    <property type="protein sequence ID" value="ENSMUSP00000111471.3"/>
    <property type="gene ID" value="ENSMUSG00000022680.15"/>
</dbReference>
<dbReference type="GeneID" id="94184"/>
<dbReference type="KEGG" id="mmu:94184"/>
<dbReference type="UCSC" id="uc007ygl.2">
    <molecule id="Q99K01-3"/>
    <property type="organism name" value="mouse"/>
</dbReference>
<dbReference type="UCSC" id="uc007ygm.2">
    <molecule id="Q99K01-2"/>
    <property type="organism name" value="mouse"/>
</dbReference>
<dbReference type="UCSC" id="uc007ygn.2">
    <molecule id="Q99K01-1"/>
    <property type="organism name" value="mouse"/>
</dbReference>
<dbReference type="AGR" id="MGI:1920909"/>
<dbReference type="CTD" id="23042"/>
<dbReference type="MGI" id="MGI:1920909">
    <property type="gene designation" value="Pdxdc1"/>
</dbReference>
<dbReference type="VEuPathDB" id="HostDB:ENSMUSG00000022680"/>
<dbReference type="eggNOG" id="KOG0630">
    <property type="taxonomic scope" value="Eukaryota"/>
</dbReference>
<dbReference type="GeneTree" id="ENSGT00390000009628"/>
<dbReference type="HOGENOM" id="CLU_014327_0_0_1"/>
<dbReference type="InParanoid" id="Q99K01"/>
<dbReference type="OMA" id="RLQYACR"/>
<dbReference type="OrthoDB" id="2161780at2759"/>
<dbReference type="PhylomeDB" id="Q99K01"/>
<dbReference type="TreeFam" id="TF313101"/>
<dbReference type="BioGRID-ORCS" id="94184">
    <property type="hits" value="3 hits in 78 CRISPR screens"/>
</dbReference>
<dbReference type="ChiTaRS" id="Pdxdc1">
    <property type="organism name" value="mouse"/>
</dbReference>
<dbReference type="PRO" id="PR:Q99K01"/>
<dbReference type="Proteomes" id="UP000000589">
    <property type="component" value="Chromosome 16"/>
</dbReference>
<dbReference type="RNAct" id="Q99K01">
    <property type="molecule type" value="protein"/>
</dbReference>
<dbReference type="Bgee" id="ENSMUSG00000022680">
    <property type="expression patterns" value="Expressed in left colon and 267 other cell types or tissues"/>
</dbReference>
<dbReference type="ExpressionAtlas" id="Q99K01">
    <property type="expression patterns" value="baseline and differential"/>
</dbReference>
<dbReference type="GO" id="GO:0016831">
    <property type="term" value="F:carboxy-lyase activity"/>
    <property type="evidence" value="ECO:0007669"/>
    <property type="project" value="UniProtKB-KW"/>
</dbReference>
<dbReference type="GO" id="GO:0030170">
    <property type="term" value="F:pyridoxal phosphate binding"/>
    <property type="evidence" value="ECO:0007669"/>
    <property type="project" value="InterPro"/>
</dbReference>
<dbReference type="GO" id="GO:0019752">
    <property type="term" value="P:carboxylic acid metabolic process"/>
    <property type="evidence" value="ECO:0007669"/>
    <property type="project" value="InterPro"/>
</dbReference>
<dbReference type="FunFam" id="3.40.640.10:FF:000036">
    <property type="entry name" value="pyridoxal-dependent decarboxylase domain-containing protein 1 isoform X2"/>
    <property type="match status" value="1"/>
</dbReference>
<dbReference type="Gene3D" id="3.90.1150.170">
    <property type="match status" value="1"/>
</dbReference>
<dbReference type="Gene3D" id="3.40.640.10">
    <property type="entry name" value="Type I PLP-dependent aspartate aminotransferase-like (Major domain)"/>
    <property type="match status" value="1"/>
</dbReference>
<dbReference type="InterPro" id="IPR050477">
    <property type="entry name" value="GrpII_AminoAcid_Decarb"/>
</dbReference>
<dbReference type="InterPro" id="IPR055103">
    <property type="entry name" value="PDXDC1-like_2nd"/>
</dbReference>
<dbReference type="InterPro" id="IPR055102">
    <property type="entry name" value="PDXDC1-like_3rd"/>
</dbReference>
<dbReference type="InterPro" id="IPR002129">
    <property type="entry name" value="PyrdxlP-dep_de-COase"/>
</dbReference>
<dbReference type="InterPro" id="IPR015424">
    <property type="entry name" value="PyrdxlP-dep_Trfase"/>
</dbReference>
<dbReference type="InterPro" id="IPR015421">
    <property type="entry name" value="PyrdxlP-dep_Trfase_major"/>
</dbReference>
<dbReference type="PANTHER" id="PTHR42735">
    <property type="match status" value="1"/>
</dbReference>
<dbReference type="PANTHER" id="PTHR42735:SF1">
    <property type="entry name" value="PYRIDOXAL-DEPENDENT DECARBOXYLASE DOMAIN-CONTAINING PROTEIN 1-RELATED"/>
    <property type="match status" value="1"/>
</dbReference>
<dbReference type="Pfam" id="PF22930">
    <property type="entry name" value="PDXDC1-like_cen"/>
    <property type="match status" value="1"/>
</dbReference>
<dbReference type="Pfam" id="PF22937">
    <property type="entry name" value="PDXDC1-like_cen2"/>
    <property type="match status" value="1"/>
</dbReference>
<dbReference type="Pfam" id="PF00282">
    <property type="entry name" value="Pyridoxal_deC"/>
    <property type="match status" value="1"/>
</dbReference>
<dbReference type="SUPFAM" id="SSF53383">
    <property type="entry name" value="PLP-dependent transferases"/>
    <property type="match status" value="1"/>
</dbReference>
<accession>Q99K01</accession>
<accession>Q3TCL3</accession>
<accession>Q3TN13</accession>
<accession>Q8BMK9</accession>
<accession>Q8BW02</accession>
<accession>Q8BW51</accession>
<accession>Q8BZZ4</accession>
<accession>Q9DC25</accession>
<feature type="chain" id="PRO_0000297678" description="Pyridoxal-dependent decarboxylase domain-containing protein 1">
    <location>
        <begin position="1"/>
        <end position="787"/>
    </location>
</feature>
<feature type="region of interest" description="Disordered" evidence="3">
    <location>
        <begin position="26"/>
        <end position="52"/>
    </location>
</feature>
<feature type="region of interest" description="Disordered" evidence="3">
    <location>
        <begin position="682"/>
        <end position="787"/>
    </location>
</feature>
<feature type="compositionally biased region" description="Basic and acidic residues" evidence="3">
    <location>
        <begin position="26"/>
        <end position="44"/>
    </location>
</feature>
<feature type="compositionally biased region" description="Basic and acidic residues" evidence="3">
    <location>
        <begin position="725"/>
        <end position="748"/>
    </location>
</feature>
<feature type="compositionally biased region" description="Polar residues" evidence="3">
    <location>
        <begin position="759"/>
        <end position="771"/>
    </location>
</feature>
<feature type="compositionally biased region" description="Basic and acidic residues" evidence="3">
    <location>
        <begin position="772"/>
        <end position="787"/>
    </location>
</feature>
<feature type="modified residue" description="Phosphoserine" evidence="2">
    <location>
        <position position="652"/>
    </location>
</feature>
<feature type="modified residue" description="Phosphothreonine" evidence="6 7 8">
    <location>
        <position position="687"/>
    </location>
</feature>
<feature type="modified residue" description="Phosphothreonine" evidence="8">
    <location>
        <position position="691"/>
    </location>
</feature>
<feature type="modified residue" description="Phosphoserine" evidence="2">
    <location>
        <position position="710"/>
    </location>
</feature>
<feature type="modified residue" description="Phosphoserine" evidence="6">
    <location>
        <position position="718"/>
    </location>
</feature>
<feature type="modified residue" description="Phosphoserine" evidence="2">
    <location>
        <position position="722"/>
    </location>
</feature>
<feature type="modified residue" description="Phosphoserine" evidence="8">
    <location>
        <position position="748"/>
    </location>
</feature>
<feature type="modified residue" description="Phosphoserine" evidence="2">
    <location>
        <position position="778"/>
    </location>
</feature>
<feature type="splice variant" id="VSP_029421" description="In isoform 5." evidence="4">
    <original>VEDE</original>
    <variation>GFSV</variation>
    <location>
        <begin position="381"/>
        <end position="384"/>
    </location>
</feature>
<feature type="splice variant" id="VSP_029422" description="In isoform 5." evidence="4">
    <location>
        <begin position="385"/>
        <end position="787"/>
    </location>
</feature>
<feature type="splice variant" id="VSP_027344" description="In isoform 4." evidence="4">
    <original>P</original>
    <variation>PVRLMSL</variation>
    <location>
        <position position="702"/>
    </location>
</feature>
<feature type="splice variant" id="VSP_027345" description="In isoform 3." evidence="4">
    <original>GQKPFKRSLRGSDAVSETSSVSHIEDLEKVEQLSSGLEHDNLEAHSPEQPPRATDLTARQTEALQNQAQHQEDDHSQVEELERLR</original>
    <variation>DGNQGAET</variation>
    <location>
        <begin position="703"/>
        <end position="787"/>
    </location>
</feature>
<feature type="splice variant" id="VSP_027346" description="In isoform 2." evidence="4">
    <original>VEELERLR</original>
    <variation>MGTRVQRLK</variation>
    <location>
        <begin position="780"/>
        <end position="787"/>
    </location>
</feature>
<feature type="sequence conflict" description="In Ref. 1; BAE38276." evidence="5" ref="1">
    <original>I</original>
    <variation>T</variation>
    <location>
        <position position="176"/>
    </location>
</feature>
<feature type="sequence conflict" description="In Ref. 2; AAH05541." evidence="5" ref="2">
    <original>V</original>
    <variation>I</variation>
    <location>
        <position position="229"/>
    </location>
</feature>
<feature type="sequence conflict" description="In Ref. 2; AAH05541." evidence="5" ref="2">
    <original>R</original>
    <variation>K</variation>
    <location>
        <position position="356"/>
    </location>
</feature>
<feature type="sequence conflict" description="In Ref. 1; BAE38276." evidence="5" ref="1">
    <original>H</original>
    <variation>Q</variation>
    <location>
        <position position="423"/>
    </location>
</feature>
<feature type="sequence conflict" description="In Ref. 1; BAC27047." evidence="5" ref="1">
    <original>G</original>
    <variation>W</variation>
    <location>
        <position position="685"/>
    </location>
</feature>
<feature type="sequence conflict" description="In Ref. 2; AAH05541." evidence="5" ref="2">
    <original>T</original>
    <variation>A</variation>
    <location>
        <position position="756"/>
    </location>
</feature>
<name>PDXD1_MOUSE</name>
<protein>
    <recommendedName>
        <fullName>Pyridoxal-dependent decarboxylase domain-containing protein 1</fullName>
        <ecNumber>4.1.1.-</ecNumber>
    </recommendedName>
</protein>
<organism>
    <name type="scientific">Mus musculus</name>
    <name type="common">Mouse</name>
    <dbReference type="NCBI Taxonomy" id="10090"/>
    <lineage>
        <taxon>Eukaryota</taxon>
        <taxon>Metazoa</taxon>
        <taxon>Chordata</taxon>
        <taxon>Craniata</taxon>
        <taxon>Vertebrata</taxon>
        <taxon>Euteleostomi</taxon>
        <taxon>Mammalia</taxon>
        <taxon>Eutheria</taxon>
        <taxon>Euarchontoglires</taxon>
        <taxon>Glires</taxon>
        <taxon>Rodentia</taxon>
        <taxon>Myomorpha</taxon>
        <taxon>Muroidea</taxon>
        <taxon>Muridae</taxon>
        <taxon>Murinae</taxon>
        <taxon>Mus</taxon>
        <taxon>Mus</taxon>
    </lineage>
</organism>
<keyword id="KW-0025">Alternative splicing</keyword>
<keyword id="KW-0210">Decarboxylase</keyword>
<keyword id="KW-0456">Lyase</keyword>
<keyword id="KW-0597">Phosphoprotein</keyword>
<keyword id="KW-0663">Pyridoxal phosphate</keyword>
<keyword id="KW-1185">Reference proteome</keyword>